<dbReference type="EC" id="2.8.4.3" evidence="1"/>
<dbReference type="EMBL" id="BX248358">
    <property type="protein sequence ID" value="CAE49976.1"/>
    <property type="molecule type" value="Genomic_DNA"/>
</dbReference>
<dbReference type="SMR" id="Q6NGR0"/>
<dbReference type="STRING" id="257309.DIP1448"/>
<dbReference type="KEGG" id="cdi:DIP1448"/>
<dbReference type="HOGENOM" id="CLU_018697_2_2_11"/>
<dbReference type="Proteomes" id="UP000002198">
    <property type="component" value="Chromosome"/>
</dbReference>
<dbReference type="GO" id="GO:0005829">
    <property type="term" value="C:cytosol"/>
    <property type="evidence" value="ECO:0007669"/>
    <property type="project" value="TreeGrafter"/>
</dbReference>
<dbReference type="GO" id="GO:0051539">
    <property type="term" value="F:4 iron, 4 sulfur cluster binding"/>
    <property type="evidence" value="ECO:0007669"/>
    <property type="project" value="UniProtKB-UniRule"/>
</dbReference>
<dbReference type="GO" id="GO:0046872">
    <property type="term" value="F:metal ion binding"/>
    <property type="evidence" value="ECO:0007669"/>
    <property type="project" value="UniProtKB-KW"/>
</dbReference>
<dbReference type="GO" id="GO:0035597">
    <property type="term" value="F:N6-isopentenyladenosine methylthiotransferase activity"/>
    <property type="evidence" value="ECO:0007669"/>
    <property type="project" value="TreeGrafter"/>
</dbReference>
<dbReference type="CDD" id="cd01335">
    <property type="entry name" value="Radical_SAM"/>
    <property type="match status" value="1"/>
</dbReference>
<dbReference type="FunFam" id="3.40.50.12160:FF:000003">
    <property type="entry name" value="CDK5 regulatory subunit-associated protein 1"/>
    <property type="match status" value="1"/>
</dbReference>
<dbReference type="FunFam" id="3.80.30.20:FF:000001">
    <property type="entry name" value="tRNA-2-methylthio-N(6)-dimethylallyladenosine synthase 2"/>
    <property type="match status" value="1"/>
</dbReference>
<dbReference type="Gene3D" id="3.40.50.12160">
    <property type="entry name" value="Methylthiotransferase, N-terminal domain"/>
    <property type="match status" value="1"/>
</dbReference>
<dbReference type="Gene3D" id="3.80.30.20">
    <property type="entry name" value="tm_1862 like domain"/>
    <property type="match status" value="1"/>
</dbReference>
<dbReference type="HAMAP" id="MF_01864">
    <property type="entry name" value="tRNA_metthiotr_MiaB"/>
    <property type="match status" value="1"/>
</dbReference>
<dbReference type="InterPro" id="IPR006638">
    <property type="entry name" value="Elp3/MiaA/NifB-like_rSAM"/>
</dbReference>
<dbReference type="InterPro" id="IPR005839">
    <property type="entry name" value="Methylthiotransferase"/>
</dbReference>
<dbReference type="InterPro" id="IPR020612">
    <property type="entry name" value="Methylthiotransferase_CS"/>
</dbReference>
<dbReference type="InterPro" id="IPR013848">
    <property type="entry name" value="Methylthiotransferase_N"/>
</dbReference>
<dbReference type="InterPro" id="IPR038135">
    <property type="entry name" value="Methylthiotransferase_N_sf"/>
</dbReference>
<dbReference type="InterPro" id="IPR006463">
    <property type="entry name" value="MiaB_methiolase"/>
</dbReference>
<dbReference type="InterPro" id="IPR007197">
    <property type="entry name" value="rSAM"/>
</dbReference>
<dbReference type="InterPro" id="IPR023404">
    <property type="entry name" value="rSAM_horseshoe"/>
</dbReference>
<dbReference type="InterPro" id="IPR002792">
    <property type="entry name" value="TRAM_dom"/>
</dbReference>
<dbReference type="NCBIfam" id="TIGR01574">
    <property type="entry name" value="miaB-methiolase"/>
    <property type="match status" value="1"/>
</dbReference>
<dbReference type="NCBIfam" id="TIGR00089">
    <property type="entry name" value="MiaB/RimO family radical SAM methylthiotransferase"/>
    <property type="match status" value="1"/>
</dbReference>
<dbReference type="PANTHER" id="PTHR43020">
    <property type="entry name" value="CDK5 REGULATORY SUBUNIT-ASSOCIATED PROTEIN 1"/>
    <property type="match status" value="1"/>
</dbReference>
<dbReference type="PANTHER" id="PTHR43020:SF2">
    <property type="entry name" value="MITOCHONDRIAL TRNA METHYLTHIOTRANSFERASE CDK5RAP1"/>
    <property type="match status" value="1"/>
</dbReference>
<dbReference type="Pfam" id="PF04055">
    <property type="entry name" value="Radical_SAM"/>
    <property type="match status" value="1"/>
</dbReference>
<dbReference type="Pfam" id="PF00919">
    <property type="entry name" value="UPF0004"/>
    <property type="match status" value="1"/>
</dbReference>
<dbReference type="SFLD" id="SFLDF00273">
    <property type="entry name" value="(dimethylallyl)adenosine_tRNA"/>
    <property type="match status" value="1"/>
</dbReference>
<dbReference type="SFLD" id="SFLDG01082">
    <property type="entry name" value="B12-binding_domain_containing"/>
    <property type="match status" value="1"/>
</dbReference>
<dbReference type="SFLD" id="SFLDS00029">
    <property type="entry name" value="Radical_SAM"/>
    <property type="match status" value="1"/>
</dbReference>
<dbReference type="SMART" id="SM00729">
    <property type="entry name" value="Elp3"/>
    <property type="match status" value="1"/>
</dbReference>
<dbReference type="SUPFAM" id="SSF102114">
    <property type="entry name" value="Radical SAM enzymes"/>
    <property type="match status" value="1"/>
</dbReference>
<dbReference type="PROSITE" id="PS51449">
    <property type="entry name" value="MTTASE_N"/>
    <property type="match status" value="1"/>
</dbReference>
<dbReference type="PROSITE" id="PS01278">
    <property type="entry name" value="MTTASE_RADICAL"/>
    <property type="match status" value="1"/>
</dbReference>
<dbReference type="PROSITE" id="PS51918">
    <property type="entry name" value="RADICAL_SAM"/>
    <property type="match status" value="1"/>
</dbReference>
<dbReference type="PROSITE" id="PS50926">
    <property type="entry name" value="TRAM"/>
    <property type="match status" value="1"/>
</dbReference>
<comment type="function">
    <text evidence="1">Catalyzes the methylthiolation of N6-(dimethylallyl)adenosine (i(6)A), leading to the formation of 2-methylthio-N6-(dimethylallyl)adenosine (ms(2)i(6)A) at position 37 in tRNAs that read codons beginning with uridine.</text>
</comment>
<comment type="catalytic activity">
    <reaction evidence="1">
        <text>N(6)-dimethylallyladenosine(37) in tRNA + (sulfur carrier)-SH + AH2 + 2 S-adenosyl-L-methionine = 2-methylsulfanyl-N(6)-dimethylallyladenosine(37) in tRNA + (sulfur carrier)-H + 5'-deoxyadenosine + L-methionine + A + S-adenosyl-L-homocysteine + 2 H(+)</text>
        <dbReference type="Rhea" id="RHEA:37067"/>
        <dbReference type="Rhea" id="RHEA-COMP:10375"/>
        <dbReference type="Rhea" id="RHEA-COMP:10376"/>
        <dbReference type="Rhea" id="RHEA-COMP:14737"/>
        <dbReference type="Rhea" id="RHEA-COMP:14739"/>
        <dbReference type="ChEBI" id="CHEBI:13193"/>
        <dbReference type="ChEBI" id="CHEBI:15378"/>
        <dbReference type="ChEBI" id="CHEBI:17319"/>
        <dbReference type="ChEBI" id="CHEBI:17499"/>
        <dbReference type="ChEBI" id="CHEBI:29917"/>
        <dbReference type="ChEBI" id="CHEBI:57844"/>
        <dbReference type="ChEBI" id="CHEBI:57856"/>
        <dbReference type="ChEBI" id="CHEBI:59789"/>
        <dbReference type="ChEBI" id="CHEBI:64428"/>
        <dbReference type="ChEBI" id="CHEBI:74415"/>
        <dbReference type="ChEBI" id="CHEBI:74417"/>
        <dbReference type="EC" id="2.8.4.3"/>
    </reaction>
</comment>
<comment type="cofactor">
    <cofactor evidence="1">
        <name>[4Fe-4S] cluster</name>
        <dbReference type="ChEBI" id="CHEBI:49883"/>
    </cofactor>
    <text evidence="1">Binds 2 [4Fe-4S] clusters. One cluster is coordinated with 3 cysteines and an exchangeable S-adenosyl-L-methionine.</text>
</comment>
<comment type="subunit">
    <text evidence="1">Monomer.</text>
</comment>
<comment type="subcellular location">
    <subcellularLocation>
        <location evidence="1">Cytoplasm</location>
    </subcellularLocation>
</comment>
<comment type="similarity">
    <text evidence="1">Belongs to the methylthiotransferase family. MiaB subfamily.</text>
</comment>
<evidence type="ECO:0000255" key="1">
    <source>
        <dbReference type="HAMAP-Rule" id="MF_01864"/>
    </source>
</evidence>
<evidence type="ECO:0000255" key="2">
    <source>
        <dbReference type="PROSITE-ProRule" id="PRU01266"/>
    </source>
</evidence>
<evidence type="ECO:0000256" key="3">
    <source>
        <dbReference type="SAM" id="MobiDB-lite"/>
    </source>
</evidence>
<gene>
    <name evidence="1" type="primary">miaB</name>
    <name type="ordered locus">DIP1448</name>
</gene>
<reference key="1">
    <citation type="journal article" date="2003" name="Nucleic Acids Res.">
        <title>The complete genome sequence and analysis of Corynebacterium diphtheriae NCTC13129.</title>
        <authorList>
            <person name="Cerdeno-Tarraga A.-M."/>
            <person name="Efstratiou A."/>
            <person name="Dover L.G."/>
            <person name="Holden M.T.G."/>
            <person name="Pallen M.J."/>
            <person name="Bentley S.D."/>
            <person name="Besra G.S."/>
            <person name="Churcher C.M."/>
            <person name="James K.D."/>
            <person name="De Zoysa A."/>
            <person name="Chillingworth T."/>
            <person name="Cronin A."/>
            <person name="Dowd L."/>
            <person name="Feltwell T."/>
            <person name="Hamlin N."/>
            <person name="Holroyd S."/>
            <person name="Jagels K."/>
            <person name="Moule S."/>
            <person name="Quail M.A."/>
            <person name="Rabbinowitsch E."/>
            <person name="Rutherford K.M."/>
            <person name="Thomson N.R."/>
            <person name="Unwin L."/>
            <person name="Whitehead S."/>
            <person name="Barrell B.G."/>
            <person name="Parkhill J."/>
        </authorList>
    </citation>
    <scope>NUCLEOTIDE SEQUENCE [LARGE SCALE GENOMIC DNA]</scope>
    <source>
        <strain>ATCC 700971 / NCTC 13129 / Biotype gravis</strain>
    </source>
</reference>
<name>MIAB_CORDI</name>
<proteinExistence type="inferred from homology"/>
<protein>
    <recommendedName>
        <fullName evidence="1">tRNA-2-methylthio-N(6)-dimethylallyladenosine synthase</fullName>
        <ecNumber evidence="1">2.8.4.3</ecNumber>
    </recommendedName>
    <alternativeName>
        <fullName evidence="1">(Dimethylallyl)adenosine tRNA methylthiotransferase MiaB</fullName>
    </alternativeName>
    <alternativeName>
        <fullName evidence="1">tRNA-i(6)A37 methylthiotransferase</fullName>
    </alternativeName>
</protein>
<keyword id="KW-0004">4Fe-4S</keyword>
<keyword id="KW-0963">Cytoplasm</keyword>
<keyword id="KW-0408">Iron</keyword>
<keyword id="KW-0411">Iron-sulfur</keyword>
<keyword id="KW-0479">Metal-binding</keyword>
<keyword id="KW-1185">Reference proteome</keyword>
<keyword id="KW-0949">S-adenosyl-L-methionine</keyword>
<keyword id="KW-0808">Transferase</keyword>
<keyword id="KW-0819">tRNA processing</keyword>
<feature type="chain" id="PRO_0000374238" description="tRNA-2-methylthio-N(6)-dimethylallyladenosine synthase">
    <location>
        <begin position="1"/>
        <end position="516"/>
    </location>
</feature>
<feature type="domain" description="MTTase N-terminal" evidence="1">
    <location>
        <begin position="17"/>
        <end position="133"/>
    </location>
</feature>
<feature type="domain" description="Radical SAM core" evidence="2">
    <location>
        <begin position="156"/>
        <end position="392"/>
    </location>
</feature>
<feature type="domain" description="TRAM" evidence="1">
    <location>
        <begin position="395"/>
        <end position="466"/>
    </location>
</feature>
<feature type="region of interest" description="Disordered" evidence="3">
    <location>
        <begin position="409"/>
        <end position="438"/>
    </location>
</feature>
<feature type="region of interest" description="Disordered" evidence="3">
    <location>
        <begin position="492"/>
        <end position="516"/>
    </location>
</feature>
<feature type="compositionally biased region" description="Basic and acidic residues" evidence="3">
    <location>
        <begin position="412"/>
        <end position="438"/>
    </location>
</feature>
<feature type="binding site" evidence="1">
    <location>
        <position position="26"/>
    </location>
    <ligand>
        <name>[4Fe-4S] cluster</name>
        <dbReference type="ChEBI" id="CHEBI:49883"/>
        <label>1</label>
    </ligand>
</feature>
<feature type="binding site" evidence="1">
    <location>
        <position position="62"/>
    </location>
    <ligand>
        <name>[4Fe-4S] cluster</name>
        <dbReference type="ChEBI" id="CHEBI:49883"/>
        <label>1</label>
    </ligand>
</feature>
<feature type="binding site" evidence="1">
    <location>
        <position position="96"/>
    </location>
    <ligand>
        <name>[4Fe-4S] cluster</name>
        <dbReference type="ChEBI" id="CHEBI:49883"/>
        <label>1</label>
    </ligand>
</feature>
<feature type="binding site" evidence="1">
    <location>
        <position position="170"/>
    </location>
    <ligand>
        <name>[4Fe-4S] cluster</name>
        <dbReference type="ChEBI" id="CHEBI:49883"/>
        <label>2</label>
        <note>4Fe-4S-S-AdoMet</note>
    </ligand>
</feature>
<feature type="binding site" evidence="1">
    <location>
        <position position="174"/>
    </location>
    <ligand>
        <name>[4Fe-4S] cluster</name>
        <dbReference type="ChEBI" id="CHEBI:49883"/>
        <label>2</label>
        <note>4Fe-4S-S-AdoMet</note>
    </ligand>
</feature>
<feature type="binding site" evidence="1">
    <location>
        <position position="177"/>
    </location>
    <ligand>
        <name>[4Fe-4S] cluster</name>
        <dbReference type="ChEBI" id="CHEBI:49883"/>
        <label>2</label>
        <note>4Fe-4S-S-AdoMet</note>
    </ligand>
</feature>
<sequence length="516" mass="56480">MFNDIESHRVPNVGQGRSFEVRTFGCQMNVHDSERLSGLLEEAGYHAVADGEEPDLVVFNTCAVRENADKRLYGTLGQLRSAKEKNPRMQIAVGGCLAQKDKDTVVAKAPWVDAVFGTHNMGALPSLLSRSEHNKRAEVEIVDSLEQFPSVLPAKRESAYAGWVSVSVGCNNTCTFCIVPSLRGKEVDRRPGDILAEVQALVDQGVSEVTLLGQNVNAYGVNFSDPDIQRDRFAFSKLLRACGKIEGLERLRFTSPHPAEFTHDVIDAMAETPNVCPQLHMPLQSGSDKVLKEMRRSYRSKKFLGILEEVRAKIPHASITTDIIVGFPGETEEDFQETLNVVEKARFTSAYTFQYSPRPGTPAADYADQVPKEVVQDRYERLLALQERISTEENAKLIGTEVELLVQASGGRKNDKTQRMTGRSRDGRLVHFDPQGHVDGDIRPGDVITTVVTEAKPFFLIADSGVLQHRRTKAGDMSAAGKVPTTAPVGVGLGLPSIGSPAQKRSETSKSSGCGC</sequence>
<accession>Q6NGR0</accession>
<organism>
    <name type="scientific">Corynebacterium diphtheriae (strain ATCC 700971 / NCTC 13129 / Biotype gravis)</name>
    <dbReference type="NCBI Taxonomy" id="257309"/>
    <lineage>
        <taxon>Bacteria</taxon>
        <taxon>Bacillati</taxon>
        <taxon>Actinomycetota</taxon>
        <taxon>Actinomycetes</taxon>
        <taxon>Mycobacteriales</taxon>
        <taxon>Corynebacteriaceae</taxon>
        <taxon>Corynebacterium</taxon>
    </lineage>
</organism>